<reference key="1">
    <citation type="journal article" date="2005" name="J. Bacteriol.">
        <title>Insights on evolution of virulence and resistance from the complete genome analysis of an early methicillin-resistant Staphylococcus aureus strain and a biofilm-producing methicillin-resistant Staphylococcus epidermidis strain.</title>
        <authorList>
            <person name="Gill S.R."/>
            <person name="Fouts D.E."/>
            <person name="Archer G.L."/>
            <person name="Mongodin E.F."/>
            <person name="DeBoy R.T."/>
            <person name="Ravel J."/>
            <person name="Paulsen I.T."/>
            <person name="Kolonay J.F."/>
            <person name="Brinkac L.M."/>
            <person name="Beanan M.J."/>
            <person name="Dodson R.J."/>
            <person name="Daugherty S.C."/>
            <person name="Madupu R."/>
            <person name="Angiuoli S.V."/>
            <person name="Durkin A.S."/>
            <person name="Haft D.H."/>
            <person name="Vamathevan J.J."/>
            <person name="Khouri H."/>
            <person name="Utterback T.R."/>
            <person name="Lee C."/>
            <person name="Dimitrov G."/>
            <person name="Jiang L."/>
            <person name="Qin H."/>
            <person name="Weidman J."/>
            <person name="Tran K."/>
            <person name="Kang K.H."/>
            <person name="Hance I.R."/>
            <person name="Nelson K.E."/>
            <person name="Fraser C.M."/>
        </authorList>
    </citation>
    <scope>NUCLEOTIDE SEQUENCE [LARGE SCALE GENOMIC DNA]</scope>
    <source>
        <strain>COL</strain>
    </source>
</reference>
<name>AGRA_STAAC</name>
<protein>
    <recommendedName>
        <fullName>Accessory gene regulator A</fullName>
    </recommendedName>
</protein>
<sequence>MKIFICEDDPKQRENMVTIIKNYIMIEEKPMEIALATDNPYEVLEQAKNMNDIGCYFLDIQLSTDINGIKLGSEIRKHDPVGNIIFVTSHSELTYLTFVYKVAAMDFIFKDDPAELRTRIIDCLETAHTRLQLLSKDNSVETIELKRGSNSVYVQYDDIMFFESSTKSHRLIAHLDNRQIEFYGNLKELSQLDDRFFRCHNSFVVNRHNIESIDSKERIVYFKNKEHCYASVRNVKKI</sequence>
<accession>Q5HEG2</accession>
<gene>
    <name type="primary">agrA</name>
    <name type="ordered locus">SACOL2026</name>
</gene>
<evidence type="ECO:0000250" key="1"/>
<evidence type="ECO:0000255" key="2">
    <source>
        <dbReference type="PROSITE-ProRule" id="PRU00112"/>
    </source>
</evidence>
<evidence type="ECO:0000255" key="3">
    <source>
        <dbReference type="PROSITE-ProRule" id="PRU00169"/>
    </source>
</evidence>
<evidence type="ECO:0007829" key="4">
    <source>
        <dbReference type="PDB" id="4XQJ"/>
    </source>
</evidence>
<organism>
    <name type="scientific">Staphylococcus aureus (strain COL)</name>
    <dbReference type="NCBI Taxonomy" id="93062"/>
    <lineage>
        <taxon>Bacteria</taxon>
        <taxon>Bacillati</taxon>
        <taxon>Bacillota</taxon>
        <taxon>Bacilli</taxon>
        <taxon>Bacillales</taxon>
        <taxon>Staphylococcaceae</taxon>
        <taxon>Staphylococcus</taxon>
    </lineage>
</organism>
<dbReference type="EMBL" id="CP000046">
    <property type="protein sequence ID" value="AAW36991.1"/>
    <property type="molecule type" value="Genomic_DNA"/>
</dbReference>
<dbReference type="RefSeq" id="WP_000688492.1">
    <property type="nucleotide sequence ID" value="NZ_JBGOFO010000006.1"/>
</dbReference>
<dbReference type="PDB" id="4XQJ">
    <property type="method" value="X-ray"/>
    <property type="resolution" value="1.90 A"/>
    <property type="chains" value="A/D=140-238"/>
</dbReference>
<dbReference type="PDB" id="4XQN">
    <property type="method" value="X-ray"/>
    <property type="resolution" value="2.30 A"/>
    <property type="chains" value="A/D/G/J=140-238"/>
</dbReference>
<dbReference type="PDB" id="4XQQ">
    <property type="method" value="X-ray"/>
    <property type="resolution" value="3.05 A"/>
    <property type="chains" value="A/B/C/D=139-238"/>
</dbReference>
<dbReference type="PDB" id="4XXE">
    <property type="method" value="X-ray"/>
    <property type="resolution" value="3.20 A"/>
    <property type="chains" value="A/D=140-238"/>
</dbReference>
<dbReference type="PDB" id="4XYO">
    <property type="method" value="X-ray"/>
    <property type="resolution" value="2.00 A"/>
    <property type="chains" value="A=140-238"/>
</dbReference>
<dbReference type="PDB" id="4XYQ">
    <property type="method" value="X-ray"/>
    <property type="resolution" value="2.40 A"/>
    <property type="chains" value="A=137-238"/>
</dbReference>
<dbReference type="PDBsum" id="4XQJ"/>
<dbReference type="PDBsum" id="4XQN"/>
<dbReference type="PDBsum" id="4XQQ"/>
<dbReference type="PDBsum" id="4XXE"/>
<dbReference type="PDBsum" id="4XYO"/>
<dbReference type="PDBsum" id="4XYQ"/>
<dbReference type="BMRB" id="Q5HEG2"/>
<dbReference type="SMR" id="Q5HEG2"/>
<dbReference type="KEGG" id="sac:SACOL2026"/>
<dbReference type="HOGENOM" id="CLU_000445_14_6_9"/>
<dbReference type="EvolutionaryTrace" id="Q5HEG2"/>
<dbReference type="PRO" id="PR:Q5HEG2"/>
<dbReference type="Proteomes" id="UP000000530">
    <property type="component" value="Chromosome"/>
</dbReference>
<dbReference type="GO" id="GO:0005737">
    <property type="term" value="C:cytoplasm"/>
    <property type="evidence" value="ECO:0007669"/>
    <property type="project" value="UniProtKB-SubCell"/>
</dbReference>
<dbReference type="GO" id="GO:0003677">
    <property type="term" value="F:DNA binding"/>
    <property type="evidence" value="ECO:0007669"/>
    <property type="project" value="UniProtKB-KW"/>
</dbReference>
<dbReference type="GO" id="GO:0000156">
    <property type="term" value="F:phosphorelay response regulator activity"/>
    <property type="evidence" value="ECO:0007669"/>
    <property type="project" value="InterPro"/>
</dbReference>
<dbReference type="CDD" id="cd17533">
    <property type="entry name" value="REC_LytTR_AgrA-like"/>
    <property type="match status" value="1"/>
</dbReference>
<dbReference type="FunFam" id="2.40.50.1020:FF:000005">
    <property type="entry name" value="Accessory gene regulator A"/>
    <property type="match status" value="1"/>
</dbReference>
<dbReference type="Gene3D" id="3.40.50.2300">
    <property type="match status" value="1"/>
</dbReference>
<dbReference type="Gene3D" id="2.40.50.1020">
    <property type="entry name" value="LytTr DNA-binding domain"/>
    <property type="match status" value="1"/>
</dbReference>
<dbReference type="InterPro" id="IPR011006">
    <property type="entry name" value="CheY-like_superfamily"/>
</dbReference>
<dbReference type="InterPro" id="IPR046947">
    <property type="entry name" value="LytR-like"/>
</dbReference>
<dbReference type="InterPro" id="IPR007492">
    <property type="entry name" value="LytTR_DNA-bd_dom"/>
</dbReference>
<dbReference type="InterPro" id="IPR001789">
    <property type="entry name" value="Sig_transdc_resp-reg_receiver"/>
</dbReference>
<dbReference type="NCBIfam" id="NF046049">
    <property type="entry name" value="quorum_RR_AgrA"/>
    <property type="match status" value="1"/>
</dbReference>
<dbReference type="PANTHER" id="PTHR37299:SF3">
    <property type="entry name" value="STAGE 0 SPORULATION PROTEIN A HOMOLOG"/>
    <property type="match status" value="1"/>
</dbReference>
<dbReference type="PANTHER" id="PTHR37299">
    <property type="entry name" value="TRANSCRIPTIONAL REGULATOR-RELATED"/>
    <property type="match status" value="1"/>
</dbReference>
<dbReference type="Pfam" id="PF04397">
    <property type="entry name" value="LytTR"/>
    <property type="match status" value="1"/>
</dbReference>
<dbReference type="Pfam" id="PF00072">
    <property type="entry name" value="Response_reg"/>
    <property type="match status" value="1"/>
</dbReference>
<dbReference type="SMART" id="SM00850">
    <property type="entry name" value="LytTR"/>
    <property type="match status" value="1"/>
</dbReference>
<dbReference type="SMART" id="SM00448">
    <property type="entry name" value="REC"/>
    <property type="match status" value="1"/>
</dbReference>
<dbReference type="SUPFAM" id="SSF52172">
    <property type="entry name" value="CheY-like"/>
    <property type="match status" value="1"/>
</dbReference>
<dbReference type="PROSITE" id="PS50930">
    <property type="entry name" value="HTH_LYTTR"/>
    <property type="match status" value="1"/>
</dbReference>
<dbReference type="PROSITE" id="PS50110">
    <property type="entry name" value="RESPONSE_REGULATORY"/>
    <property type="match status" value="1"/>
</dbReference>
<feature type="chain" id="PRO_0000080995" description="Accessory gene regulator A">
    <location>
        <begin position="1"/>
        <end position="238"/>
    </location>
</feature>
<feature type="domain" description="Response regulatory" evidence="3">
    <location>
        <begin position="2"/>
        <end position="125"/>
    </location>
</feature>
<feature type="domain" description="HTH LytTR-type" evidence="2">
    <location>
        <begin position="143"/>
        <end position="238"/>
    </location>
</feature>
<feature type="modified residue" description="4-aspartylphosphate" evidence="3">
    <location>
        <position position="59"/>
    </location>
</feature>
<feature type="strand" evidence="4">
    <location>
        <begin position="142"/>
        <end position="146"/>
    </location>
</feature>
<feature type="strand" evidence="4">
    <location>
        <begin position="151"/>
        <end position="155"/>
    </location>
</feature>
<feature type="helix" evidence="4">
    <location>
        <begin position="156"/>
        <end position="158"/>
    </location>
</feature>
<feature type="strand" evidence="4">
    <location>
        <begin position="160"/>
        <end position="164"/>
    </location>
</feature>
<feature type="strand" evidence="4">
    <location>
        <begin position="170"/>
        <end position="174"/>
    </location>
</feature>
<feature type="strand" evidence="4">
    <location>
        <begin position="179"/>
        <end position="183"/>
    </location>
</feature>
<feature type="helix" evidence="4">
    <location>
        <begin position="186"/>
        <end position="192"/>
    </location>
</feature>
<feature type="strand" evidence="4">
    <location>
        <begin position="196"/>
        <end position="200"/>
    </location>
</feature>
<feature type="strand" evidence="4">
    <location>
        <begin position="203"/>
        <end position="206"/>
    </location>
</feature>
<feature type="helix" evidence="4">
    <location>
        <begin position="207"/>
        <end position="209"/>
    </location>
</feature>
<feature type="strand" evidence="4">
    <location>
        <begin position="210"/>
        <end position="214"/>
    </location>
</feature>
<feature type="turn" evidence="4">
    <location>
        <begin position="215"/>
        <end position="218"/>
    </location>
</feature>
<feature type="strand" evidence="4">
    <location>
        <begin position="219"/>
        <end position="222"/>
    </location>
</feature>
<feature type="strand" evidence="4">
    <location>
        <begin position="227"/>
        <end position="229"/>
    </location>
</feature>
<feature type="turn" evidence="4">
    <location>
        <begin position="232"/>
        <end position="234"/>
    </location>
</feature>
<feature type="helix" evidence="4">
    <location>
        <begin position="235"/>
        <end position="237"/>
    </location>
</feature>
<keyword id="KW-0002">3D-structure</keyword>
<keyword id="KW-0010">Activator</keyword>
<keyword id="KW-0963">Cytoplasm</keyword>
<keyword id="KW-0238">DNA-binding</keyword>
<keyword id="KW-0597">Phosphoprotein</keyword>
<keyword id="KW-0804">Transcription</keyword>
<keyword id="KW-0805">Transcription regulation</keyword>
<keyword id="KW-0902">Two-component regulatory system</keyword>
<comment type="function">
    <text evidence="1">Required for high-level post-exponential phase expression of a series of secreted proteins.</text>
</comment>
<comment type="subcellular location">
    <subcellularLocation>
        <location evidence="1">Cytoplasm</location>
    </subcellularLocation>
</comment>
<proteinExistence type="evidence at protein level"/>